<dbReference type="EC" id="7.1.1.-" evidence="1"/>
<dbReference type="EMBL" id="CP001025">
    <property type="protein sequence ID" value="ACB64637.1"/>
    <property type="molecule type" value="Genomic_DNA"/>
</dbReference>
<dbReference type="RefSeq" id="WP_006398806.1">
    <property type="nucleotide sequence ID" value="NC_010551.1"/>
</dbReference>
<dbReference type="SMR" id="B1YTP9"/>
<dbReference type="GeneID" id="98107313"/>
<dbReference type="KEGG" id="bac:BamMC406_2158"/>
<dbReference type="HOGENOM" id="CLU_067218_5_1_4"/>
<dbReference type="OrthoDB" id="9808559at2"/>
<dbReference type="Proteomes" id="UP000001680">
    <property type="component" value="Chromosome 1"/>
</dbReference>
<dbReference type="GO" id="GO:0005886">
    <property type="term" value="C:plasma membrane"/>
    <property type="evidence" value="ECO:0007669"/>
    <property type="project" value="UniProtKB-SubCell"/>
</dbReference>
<dbReference type="GO" id="GO:0051539">
    <property type="term" value="F:4 iron, 4 sulfur cluster binding"/>
    <property type="evidence" value="ECO:0007669"/>
    <property type="project" value="UniProtKB-KW"/>
</dbReference>
<dbReference type="GO" id="GO:0005506">
    <property type="term" value="F:iron ion binding"/>
    <property type="evidence" value="ECO:0007669"/>
    <property type="project" value="UniProtKB-UniRule"/>
</dbReference>
<dbReference type="GO" id="GO:0050136">
    <property type="term" value="F:NADH:ubiquinone reductase (non-electrogenic) activity"/>
    <property type="evidence" value="ECO:0007669"/>
    <property type="project" value="UniProtKB-UniRule"/>
</dbReference>
<dbReference type="GO" id="GO:0048038">
    <property type="term" value="F:quinone binding"/>
    <property type="evidence" value="ECO:0007669"/>
    <property type="project" value="UniProtKB-KW"/>
</dbReference>
<dbReference type="GO" id="GO:0009060">
    <property type="term" value="P:aerobic respiration"/>
    <property type="evidence" value="ECO:0007669"/>
    <property type="project" value="TreeGrafter"/>
</dbReference>
<dbReference type="FunFam" id="3.30.70.3270:FF:000003">
    <property type="entry name" value="NADH-quinone oxidoreductase subunit I"/>
    <property type="match status" value="1"/>
</dbReference>
<dbReference type="Gene3D" id="3.30.70.3270">
    <property type="match status" value="1"/>
</dbReference>
<dbReference type="HAMAP" id="MF_01351">
    <property type="entry name" value="NDH1_NuoI"/>
    <property type="match status" value="1"/>
</dbReference>
<dbReference type="InterPro" id="IPR017896">
    <property type="entry name" value="4Fe4S_Fe-S-bd"/>
</dbReference>
<dbReference type="InterPro" id="IPR017900">
    <property type="entry name" value="4Fe4S_Fe_S_CS"/>
</dbReference>
<dbReference type="InterPro" id="IPR010226">
    <property type="entry name" value="NADH_quinone_OxRdtase_chainI"/>
</dbReference>
<dbReference type="NCBIfam" id="TIGR01971">
    <property type="entry name" value="NuoI"/>
    <property type="match status" value="1"/>
</dbReference>
<dbReference type="NCBIfam" id="NF004538">
    <property type="entry name" value="PRK05888.1-4"/>
    <property type="match status" value="1"/>
</dbReference>
<dbReference type="NCBIfam" id="NF004539">
    <property type="entry name" value="PRK05888.1-5"/>
    <property type="match status" value="1"/>
</dbReference>
<dbReference type="PANTHER" id="PTHR10849:SF20">
    <property type="entry name" value="NADH DEHYDROGENASE [UBIQUINONE] IRON-SULFUR PROTEIN 8, MITOCHONDRIAL"/>
    <property type="match status" value="1"/>
</dbReference>
<dbReference type="PANTHER" id="PTHR10849">
    <property type="entry name" value="NADH DEHYDROGENASE UBIQUINONE IRON-SULFUR PROTEIN 8, MITOCHONDRIAL"/>
    <property type="match status" value="1"/>
</dbReference>
<dbReference type="Pfam" id="PF12838">
    <property type="entry name" value="Fer4_7"/>
    <property type="match status" value="1"/>
</dbReference>
<dbReference type="SUPFAM" id="SSF54862">
    <property type="entry name" value="4Fe-4S ferredoxins"/>
    <property type="match status" value="1"/>
</dbReference>
<dbReference type="PROSITE" id="PS00198">
    <property type="entry name" value="4FE4S_FER_1"/>
    <property type="match status" value="2"/>
</dbReference>
<dbReference type="PROSITE" id="PS51379">
    <property type="entry name" value="4FE4S_FER_2"/>
    <property type="match status" value="2"/>
</dbReference>
<name>NUOI_BURA4</name>
<gene>
    <name evidence="1" type="primary">nuoI</name>
    <name type="ordered locus">BamMC406_2158</name>
</gene>
<accession>B1YTP9</accession>
<evidence type="ECO:0000255" key="1">
    <source>
        <dbReference type="HAMAP-Rule" id="MF_01351"/>
    </source>
</evidence>
<reference key="1">
    <citation type="submission" date="2008-04" db="EMBL/GenBank/DDBJ databases">
        <title>Complete sequence of chromosome 1 of Burkholderia ambifaria MC40-6.</title>
        <authorList>
            <person name="Copeland A."/>
            <person name="Lucas S."/>
            <person name="Lapidus A."/>
            <person name="Glavina del Rio T."/>
            <person name="Dalin E."/>
            <person name="Tice H."/>
            <person name="Pitluck S."/>
            <person name="Chain P."/>
            <person name="Malfatti S."/>
            <person name="Shin M."/>
            <person name="Vergez L."/>
            <person name="Lang D."/>
            <person name="Schmutz J."/>
            <person name="Larimer F."/>
            <person name="Land M."/>
            <person name="Hauser L."/>
            <person name="Kyrpides N."/>
            <person name="Lykidis A."/>
            <person name="Ramette A."/>
            <person name="Konstantinidis K."/>
            <person name="Tiedje J."/>
            <person name="Richardson P."/>
        </authorList>
    </citation>
    <scope>NUCLEOTIDE SEQUENCE [LARGE SCALE GENOMIC DNA]</scope>
    <source>
        <strain>MC40-6</strain>
    </source>
</reference>
<comment type="function">
    <text evidence="1">NDH-1 shuttles electrons from NADH, via FMN and iron-sulfur (Fe-S) centers, to quinones in the respiratory chain. The immediate electron acceptor for the enzyme in this species is believed to be ubiquinone. Couples the redox reaction to proton translocation (for every two electrons transferred, four hydrogen ions are translocated across the cytoplasmic membrane), and thus conserves the redox energy in a proton gradient.</text>
</comment>
<comment type="catalytic activity">
    <reaction evidence="1">
        <text>a quinone + NADH + 5 H(+)(in) = a quinol + NAD(+) + 4 H(+)(out)</text>
        <dbReference type="Rhea" id="RHEA:57888"/>
        <dbReference type="ChEBI" id="CHEBI:15378"/>
        <dbReference type="ChEBI" id="CHEBI:24646"/>
        <dbReference type="ChEBI" id="CHEBI:57540"/>
        <dbReference type="ChEBI" id="CHEBI:57945"/>
        <dbReference type="ChEBI" id="CHEBI:132124"/>
    </reaction>
</comment>
<comment type="cofactor">
    <cofactor evidence="1">
        <name>[4Fe-4S] cluster</name>
        <dbReference type="ChEBI" id="CHEBI:49883"/>
    </cofactor>
    <text evidence="1">Binds 2 [4Fe-4S] clusters per subunit.</text>
</comment>
<comment type="subunit">
    <text evidence="1">NDH-1 is composed of 14 different subunits. Subunits NuoA, H, J, K, L, M, N constitute the membrane sector of the complex.</text>
</comment>
<comment type="subcellular location">
    <subcellularLocation>
        <location evidence="1">Cell inner membrane</location>
        <topology evidence="1">Peripheral membrane protein</topology>
    </subcellularLocation>
</comment>
<comment type="similarity">
    <text evidence="1">Belongs to the complex I 23 kDa subunit family.</text>
</comment>
<organism>
    <name type="scientific">Burkholderia ambifaria (strain MC40-6)</name>
    <dbReference type="NCBI Taxonomy" id="398577"/>
    <lineage>
        <taxon>Bacteria</taxon>
        <taxon>Pseudomonadati</taxon>
        <taxon>Pseudomonadota</taxon>
        <taxon>Betaproteobacteria</taxon>
        <taxon>Burkholderiales</taxon>
        <taxon>Burkholderiaceae</taxon>
        <taxon>Burkholderia</taxon>
        <taxon>Burkholderia cepacia complex</taxon>
    </lineage>
</organism>
<feature type="chain" id="PRO_1000143634" description="NADH-quinone oxidoreductase subunit I">
    <location>
        <begin position="1"/>
        <end position="162"/>
    </location>
</feature>
<feature type="domain" description="4Fe-4S ferredoxin-type 1" evidence="1">
    <location>
        <begin position="54"/>
        <end position="83"/>
    </location>
</feature>
<feature type="domain" description="4Fe-4S ferredoxin-type 2" evidence="1">
    <location>
        <begin position="93"/>
        <end position="122"/>
    </location>
</feature>
<feature type="binding site" evidence="1">
    <location>
        <position position="63"/>
    </location>
    <ligand>
        <name>[4Fe-4S] cluster</name>
        <dbReference type="ChEBI" id="CHEBI:49883"/>
        <label>1</label>
    </ligand>
</feature>
<feature type="binding site" evidence="1">
    <location>
        <position position="66"/>
    </location>
    <ligand>
        <name>[4Fe-4S] cluster</name>
        <dbReference type="ChEBI" id="CHEBI:49883"/>
        <label>1</label>
    </ligand>
</feature>
<feature type="binding site" evidence="1">
    <location>
        <position position="69"/>
    </location>
    <ligand>
        <name>[4Fe-4S] cluster</name>
        <dbReference type="ChEBI" id="CHEBI:49883"/>
        <label>1</label>
    </ligand>
</feature>
<feature type="binding site" evidence="1">
    <location>
        <position position="73"/>
    </location>
    <ligand>
        <name>[4Fe-4S] cluster</name>
        <dbReference type="ChEBI" id="CHEBI:49883"/>
        <label>2</label>
    </ligand>
</feature>
<feature type="binding site" evidence="1">
    <location>
        <position position="102"/>
    </location>
    <ligand>
        <name>[4Fe-4S] cluster</name>
        <dbReference type="ChEBI" id="CHEBI:49883"/>
        <label>2</label>
    </ligand>
</feature>
<feature type="binding site" evidence="1">
    <location>
        <position position="105"/>
    </location>
    <ligand>
        <name>[4Fe-4S] cluster</name>
        <dbReference type="ChEBI" id="CHEBI:49883"/>
        <label>2</label>
    </ligand>
</feature>
<feature type="binding site" evidence="1">
    <location>
        <position position="108"/>
    </location>
    <ligand>
        <name>[4Fe-4S] cluster</name>
        <dbReference type="ChEBI" id="CHEBI:49883"/>
        <label>2</label>
    </ligand>
</feature>
<feature type="binding site" evidence="1">
    <location>
        <position position="112"/>
    </location>
    <ligand>
        <name>[4Fe-4S] cluster</name>
        <dbReference type="ChEBI" id="CHEBI:49883"/>
        <label>1</label>
    </ligand>
</feature>
<protein>
    <recommendedName>
        <fullName evidence="1">NADH-quinone oxidoreductase subunit I</fullName>
        <ecNumber evidence="1">7.1.1.-</ecNumber>
    </recommendedName>
    <alternativeName>
        <fullName evidence="1">NADH dehydrogenase I subunit I</fullName>
    </alternativeName>
    <alternativeName>
        <fullName evidence="1">NDH-1 subunit I</fullName>
    </alternativeName>
</protein>
<proteinExistence type="inferred from homology"/>
<sequence>MTAIQHFFKTFFLTELLKGLALTGRYTFRRKFTVQFPEEKTPISPRFRGLHALRRYENGEERCIACKLCEAVCPALAITIESETRADNTRRTTRYDIDLTKCIFCGFCEESCPVDSIVETQILEYHGEKRGDLYFTKEMLLAVGDRYEKDIAAAKAADAPYR</sequence>
<keyword id="KW-0004">4Fe-4S</keyword>
<keyword id="KW-0997">Cell inner membrane</keyword>
<keyword id="KW-1003">Cell membrane</keyword>
<keyword id="KW-0408">Iron</keyword>
<keyword id="KW-0411">Iron-sulfur</keyword>
<keyword id="KW-0472">Membrane</keyword>
<keyword id="KW-0479">Metal-binding</keyword>
<keyword id="KW-0520">NAD</keyword>
<keyword id="KW-0874">Quinone</keyword>
<keyword id="KW-0677">Repeat</keyword>
<keyword id="KW-1278">Translocase</keyword>
<keyword id="KW-0830">Ubiquinone</keyword>